<sequence>MKFQVIAAVLLIEFCLCVVVTARMELQDVEDVENGFQKRRSCIDTIPQSRCTAFQCKHSMKYRLSFCRKTCGTC</sequence>
<proteinExistence type="inferred from homology"/>
<protein>
    <recommendedName>
        <fullName evidence="6">Kappa-stichotoxin-Sgt4a</fullName>
        <shortName evidence="6">Kappa-SHTX-Sgt4a</shortName>
    </recommendedName>
    <alternativeName>
        <fullName evidence="5">Kappa1.3-stichotoxin-Sg1a</fullName>
        <shortName evidence="5">Kappa1.3-SHTX-Sg1a</shortName>
    </alternativeName>
    <alternativeName>
        <fullName evidence="7">Potassium channel peptide toxin sg-k</fullName>
        <shortName evidence="6">SgK</shortName>
    </alternativeName>
</protein>
<organism>
    <name type="scientific">Stichodactyla gigantea</name>
    <name type="common">Giant carpet anemone</name>
    <name type="synonym">Priapus giganteus</name>
    <dbReference type="NCBI Taxonomy" id="230562"/>
    <lineage>
        <taxon>Eukaryota</taxon>
        <taxon>Metazoa</taxon>
        <taxon>Cnidaria</taxon>
        <taxon>Anthozoa</taxon>
        <taxon>Hexacorallia</taxon>
        <taxon>Actiniaria</taxon>
        <taxon>Stichodactylidae</taxon>
        <taxon>Stichodactyla</taxon>
    </lineage>
</organism>
<name>K1A_STIGI</name>
<evidence type="ECO:0000250" key="1"/>
<evidence type="ECO:0000250" key="2">
    <source>
        <dbReference type="UniProtKB" id="P29187"/>
    </source>
</evidence>
<evidence type="ECO:0000255" key="3"/>
<evidence type="ECO:0000255" key="4">
    <source>
        <dbReference type="PROSITE-ProRule" id="PRU01005"/>
    </source>
</evidence>
<evidence type="ECO:0000303" key="5">
    <source>
    </source>
</evidence>
<evidence type="ECO:0000305" key="6"/>
<evidence type="ECO:0000312" key="7">
    <source>
        <dbReference type="EMBL" id="BAJ23158.1"/>
    </source>
</evidence>
<feature type="signal peptide" evidence="3">
    <location>
        <begin position="1"/>
        <end position="22"/>
    </location>
</feature>
<feature type="propeptide" id="PRO_0000425839" evidence="1">
    <location>
        <begin position="23"/>
        <end position="39"/>
    </location>
</feature>
<feature type="peptide" id="PRO_0000425840" description="Kappa-stichotoxin-Sgt4a" evidence="2">
    <location>
        <begin position="40"/>
        <end position="74"/>
    </location>
</feature>
<feature type="domain" description="ShKT" evidence="4">
    <location>
        <begin position="42"/>
        <end position="74"/>
    </location>
</feature>
<feature type="site" description="Important residue for binding Kv1.3/KCNA3" evidence="2">
    <location>
        <position position="46"/>
    </location>
</feature>
<feature type="site" description="Important residue for binding Kv1.3/KCNA3" evidence="2">
    <location>
        <position position="50"/>
    </location>
</feature>
<feature type="site" description="Important residue for binding Kv1.3/KCNA3" evidence="2">
    <location>
        <position position="59"/>
    </location>
</feature>
<feature type="site" description="Important residue for binding Kv1.3/KCNA3" evidence="2">
    <location>
        <position position="60"/>
    </location>
</feature>
<feature type="site" description="Key residue for binding both Kv1.2/KCNA2 and Kv1.3/KCNA3 (occludes the channel pore like a cork in a bottle)" evidence="2">
    <location>
        <position position="61"/>
    </location>
</feature>
<feature type="site" description="Important residue for binding Kv1.3/KCNA3" evidence="2">
    <location>
        <position position="62"/>
    </location>
</feature>
<feature type="site" description="Important residue for binding Kv1.3/KCNA3" evidence="2">
    <location>
        <position position="66"/>
    </location>
</feature>
<feature type="disulfide bond" evidence="2">
    <location>
        <begin position="42"/>
        <end position="74"/>
    </location>
</feature>
<feature type="disulfide bond" evidence="2">
    <location>
        <begin position="51"/>
        <end position="67"/>
    </location>
</feature>
<feature type="disulfide bond" evidence="2">
    <location>
        <begin position="56"/>
        <end position="71"/>
    </location>
</feature>
<dbReference type="EMBL" id="AB595204">
    <property type="protein sequence ID" value="BAJ23158.1"/>
    <property type="molecule type" value="mRNA"/>
</dbReference>
<dbReference type="SMR" id="E2S061"/>
<dbReference type="GO" id="GO:0005576">
    <property type="term" value="C:extracellular region"/>
    <property type="evidence" value="ECO:0007669"/>
    <property type="project" value="UniProtKB-SubCell"/>
</dbReference>
<dbReference type="GO" id="GO:0042151">
    <property type="term" value="C:nematocyst"/>
    <property type="evidence" value="ECO:0007669"/>
    <property type="project" value="UniProtKB-SubCell"/>
</dbReference>
<dbReference type="GO" id="GO:0015459">
    <property type="term" value="F:potassium channel regulator activity"/>
    <property type="evidence" value="ECO:0007669"/>
    <property type="project" value="UniProtKB-KW"/>
</dbReference>
<dbReference type="GO" id="GO:0090729">
    <property type="term" value="F:toxin activity"/>
    <property type="evidence" value="ECO:0007669"/>
    <property type="project" value="UniProtKB-KW"/>
</dbReference>
<dbReference type="InterPro" id="IPR003582">
    <property type="entry name" value="ShKT_dom"/>
</dbReference>
<dbReference type="SUPFAM" id="SSF57546">
    <property type="entry name" value="Crisp domain-like"/>
    <property type="match status" value="1"/>
</dbReference>
<dbReference type="PROSITE" id="PS51670">
    <property type="entry name" value="SHKT"/>
    <property type="match status" value="1"/>
</dbReference>
<reference key="1">
    <citation type="journal article" date="2010" name="Mar. Drugs">
        <title>Screening and cDNA cloning of Kv1 potassium channel toxins in sea anemones.</title>
        <authorList>
            <person name="Yamaguchi Y."/>
            <person name="Hasegawa Y."/>
            <person name="Honma T."/>
            <person name="Nagashima Y."/>
            <person name="Shiomi K."/>
        </authorList>
    </citation>
    <scope>NUCLEOTIDE SEQUENCE [MRNA]</scope>
</reference>
<comment type="function">
    <text evidence="2">Inhibits voltage-gated potassium channels (Kv) with higher potency for Kv1.1/KCNA1 and Kv1.3/KCNA3.</text>
</comment>
<comment type="subcellular location">
    <subcellularLocation>
        <location evidence="6">Secreted</location>
    </subcellularLocation>
    <subcellularLocation>
        <location evidence="6">Nematocyst</location>
    </subcellularLocation>
</comment>
<comment type="similarity">
    <text evidence="6">Belongs to the sea anemone type 1 potassium channel toxin family. Type 1a subfamily.</text>
</comment>
<accession>E2S061</accession>
<keyword id="KW-0165">Cleavage on pair of basic residues</keyword>
<keyword id="KW-1015">Disulfide bond</keyword>
<keyword id="KW-0872">Ion channel impairing toxin</keyword>
<keyword id="KW-0166">Nematocyst</keyword>
<keyword id="KW-0528">Neurotoxin</keyword>
<keyword id="KW-0632">Potassium channel impairing toxin</keyword>
<keyword id="KW-0964">Secreted</keyword>
<keyword id="KW-0732">Signal</keyword>
<keyword id="KW-0800">Toxin</keyword>
<keyword id="KW-1220">Voltage-gated potassium channel impairing toxin</keyword>